<protein>
    <recommendedName>
        <fullName evidence="1">Ribosome-binding factor A</fullName>
    </recommendedName>
</protein>
<proteinExistence type="inferred from homology"/>
<gene>
    <name evidence="1" type="primary">rbfA</name>
    <name type="ordered locus">EcHS_A3359</name>
</gene>
<name>RBFA_ECOHS</name>
<accession>A8A4Y3</accession>
<reference key="1">
    <citation type="journal article" date="2008" name="J. Bacteriol.">
        <title>The pangenome structure of Escherichia coli: comparative genomic analysis of E. coli commensal and pathogenic isolates.</title>
        <authorList>
            <person name="Rasko D.A."/>
            <person name="Rosovitz M.J."/>
            <person name="Myers G.S.A."/>
            <person name="Mongodin E.F."/>
            <person name="Fricke W.F."/>
            <person name="Gajer P."/>
            <person name="Crabtree J."/>
            <person name="Sebaihia M."/>
            <person name="Thomson N.R."/>
            <person name="Chaudhuri R."/>
            <person name="Henderson I.R."/>
            <person name="Sperandio V."/>
            <person name="Ravel J."/>
        </authorList>
    </citation>
    <scope>NUCLEOTIDE SEQUENCE [LARGE SCALE GENOMIC DNA]</scope>
    <source>
        <strain>HS</strain>
    </source>
</reference>
<feature type="chain" id="PRO_1000057021" description="Ribosome-binding factor A">
    <location>
        <begin position="1"/>
        <end position="133"/>
    </location>
</feature>
<evidence type="ECO:0000255" key="1">
    <source>
        <dbReference type="HAMAP-Rule" id="MF_00003"/>
    </source>
</evidence>
<organism>
    <name type="scientific">Escherichia coli O9:H4 (strain HS)</name>
    <dbReference type="NCBI Taxonomy" id="331112"/>
    <lineage>
        <taxon>Bacteria</taxon>
        <taxon>Pseudomonadati</taxon>
        <taxon>Pseudomonadota</taxon>
        <taxon>Gammaproteobacteria</taxon>
        <taxon>Enterobacterales</taxon>
        <taxon>Enterobacteriaceae</taxon>
        <taxon>Escherichia</taxon>
    </lineage>
</organism>
<comment type="function">
    <text evidence="1">One of several proteins that assist in the late maturation steps of the functional core of the 30S ribosomal subunit. Associates with free 30S ribosomal subunits (but not with 30S subunits that are part of 70S ribosomes or polysomes). Required for efficient processing of 16S rRNA. May interact with the 5'-terminal helix region of 16S rRNA.</text>
</comment>
<comment type="subunit">
    <text evidence="1">Monomer. Binds 30S ribosomal subunits, but not 50S ribosomal subunits or 70S ribosomes.</text>
</comment>
<comment type="subcellular location">
    <subcellularLocation>
        <location evidence="1">Cytoplasm</location>
    </subcellularLocation>
</comment>
<comment type="similarity">
    <text evidence="1">Belongs to the RbfA family.</text>
</comment>
<keyword id="KW-0963">Cytoplasm</keyword>
<keyword id="KW-0690">Ribosome biogenesis</keyword>
<sequence length="133" mass="15154">MAKEFGRPQRVAQEMQKEIALILQREIKDPRLGMMTTVSGVEMSRDLAYAKVYVTFLNDKDEDAVKAGIKALQEASGFIRSLLGKAMRLRIVPELTFFYDNSLVEGMRMSNLVTSVVKHDEERRVNPDDSKED</sequence>
<dbReference type="EMBL" id="CP000802">
    <property type="protein sequence ID" value="ABV07587.1"/>
    <property type="molecule type" value="Genomic_DNA"/>
</dbReference>
<dbReference type="RefSeq" id="WP_001040205.1">
    <property type="nucleotide sequence ID" value="NC_009800.1"/>
</dbReference>
<dbReference type="BMRB" id="A8A4Y3"/>
<dbReference type="SMR" id="A8A4Y3"/>
<dbReference type="GeneID" id="93778816"/>
<dbReference type="KEGG" id="ecx:EcHS_A3359"/>
<dbReference type="HOGENOM" id="CLU_089475_5_0_6"/>
<dbReference type="GO" id="GO:0005829">
    <property type="term" value="C:cytosol"/>
    <property type="evidence" value="ECO:0007669"/>
    <property type="project" value="TreeGrafter"/>
</dbReference>
<dbReference type="GO" id="GO:0043024">
    <property type="term" value="F:ribosomal small subunit binding"/>
    <property type="evidence" value="ECO:0007669"/>
    <property type="project" value="TreeGrafter"/>
</dbReference>
<dbReference type="GO" id="GO:0030490">
    <property type="term" value="P:maturation of SSU-rRNA"/>
    <property type="evidence" value="ECO:0007669"/>
    <property type="project" value="UniProtKB-UniRule"/>
</dbReference>
<dbReference type="FunFam" id="3.30.300.20:FF:000007">
    <property type="entry name" value="Ribosome-binding factor A"/>
    <property type="match status" value="1"/>
</dbReference>
<dbReference type="Gene3D" id="3.30.300.20">
    <property type="match status" value="1"/>
</dbReference>
<dbReference type="HAMAP" id="MF_00003">
    <property type="entry name" value="RbfA"/>
    <property type="match status" value="1"/>
</dbReference>
<dbReference type="InterPro" id="IPR015946">
    <property type="entry name" value="KH_dom-like_a/b"/>
</dbReference>
<dbReference type="InterPro" id="IPR000238">
    <property type="entry name" value="RbfA"/>
</dbReference>
<dbReference type="InterPro" id="IPR023799">
    <property type="entry name" value="RbfA_dom_sf"/>
</dbReference>
<dbReference type="InterPro" id="IPR020053">
    <property type="entry name" value="Ribosome-bd_factorA_CS"/>
</dbReference>
<dbReference type="NCBIfam" id="TIGR00082">
    <property type="entry name" value="rbfA"/>
    <property type="match status" value="1"/>
</dbReference>
<dbReference type="PANTHER" id="PTHR33515">
    <property type="entry name" value="RIBOSOME-BINDING FACTOR A, CHLOROPLASTIC-RELATED"/>
    <property type="match status" value="1"/>
</dbReference>
<dbReference type="PANTHER" id="PTHR33515:SF1">
    <property type="entry name" value="RIBOSOME-BINDING FACTOR A, CHLOROPLASTIC-RELATED"/>
    <property type="match status" value="1"/>
</dbReference>
<dbReference type="Pfam" id="PF02033">
    <property type="entry name" value="RBFA"/>
    <property type="match status" value="1"/>
</dbReference>
<dbReference type="SUPFAM" id="SSF89919">
    <property type="entry name" value="Ribosome-binding factor A, RbfA"/>
    <property type="match status" value="1"/>
</dbReference>
<dbReference type="PROSITE" id="PS01319">
    <property type="entry name" value="RBFA"/>
    <property type="match status" value="1"/>
</dbReference>